<reference key="1">
    <citation type="journal article" date="2003" name="Nature">
        <title>Genome sequence of Bacillus cereus and comparative analysis with Bacillus anthracis.</title>
        <authorList>
            <person name="Ivanova N."/>
            <person name="Sorokin A."/>
            <person name="Anderson I."/>
            <person name="Galleron N."/>
            <person name="Candelon B."/>
            <person name="Kapatral V."/>
            <person name="Bhattacharyya A."/>
            <person name="Reznik G."/>
            <person name="Mikhailova N."/>
            <person name="Lapidus A."/>
            <person name="Chu L."/>
            <person name="Mazur M."/>
            <person name="Goltsman E."/>
            <person name="Larsen N."/>
            <person name="D'Souza M."/>
            <person name="Walunas T."/>
            <person name="Grechkin Y."/>
            <person name="Pusch G."/>
            <person name="Haselkorn R."/>
            <person name="Fonstein M."/>
            <person name="Ehrlich S.D."/>
            <person name="Overbeek R."/>
            <person name="Kyrpides N.C."/>
        </authorList>
    </citation>
    <scope>NUCLEOTIDE SEQUENCE [LARGE SCALE GENOMIC DNA]</scope>
    <source>
        <strain>ATCC 14579 / DSM 31 / CCUG 7414 / JCM 2152 / NBRC 15305 / NCIMB 9373 / NCTC 2599 / NRRL B-3711</strain>
    </source>
</reference>
<keyword id="KW-1003">Cell membrane</keyword>
<keyword id="KW-0472">Membrane</keyword>
<keyword id="KW-1185">Reference proteome</keyword>
<keyword id="KW-0812">Transmembrane</keyword>
<keyword id="KW-1133">Transmembrane helix</keyword>
<protein>
    <recommendedName>
        <fullName>UPF0324 membrane protein BC_5174</fullName>
    </recommendedName>
</protein>
<evidence type="ECO:0000255" key="1"/>
<evidence type="ECO:0000305" key="2"/>
<organism>
    <name type="scientific">Bacillus cereus (strain ATCC 14579 / DSM 31 / CCUG 7414 / JCM 2152 / NBRC 15305 / NCIMB 9373 / NCTC 2599 / NRRL B-3711)</name>
    <dbReference type="NCBI Taxonomy" id="226900"/>
    <lineage>
        <taxon>Bacteria</taxon>
        <taxon>Bacillati</taxon>
        <taxon>Bacillota</taxon>
        <taxon>Bacilli</taxon>
        <taxon>Bacillales</taxon>
        <taxon>Bacillaceae</taxon>
        <taxon>Bacillus</taxon>
        <taxon>Bacillus cereus group</taxon>
    </lineage>
</organism>
<feature type="chain" id="PRO_0000157391" description="UPF0324 membrane protein BC_5174">
    <location>
        <begin position="1"/>
        <end position="340"/>
    </location>
</feature>
<feature type="transmembrane region" description="Helical" evidence="1">
    <location>
        <begin position="13"/>
        <end position="35"/>
    </location>
</feature>
<feature type="transmembrane region" description="Helical" evidence="1">
    <location>
        <begin position="40"/>
        <end position="59"/>
    </location>
</feature>
<feature type="transmembrane region" description="Helical" evidence="1">
    <location>
        <begin position="99"/>
        <end position="118"/>
    </location>
</feature>
<feature type="transmembrane region" description="Helical" evidence="1">
    <location>
        <begin position="128"/>
        <end position="150"/>
    </location>
</feature>
<feature type="transmembrane region" description="Helical" evidence="1">
    <location>
        <begin position="157"/>
        <end position="179"/>
    </location>
</feature>
<feature type="transmembrane region" description="Helical" evidence="1">
    <location>
        <begin position="189"/>
        <end position="211"/>
    </location>
</feature>
<feature type="transmembrane region" description="Helical" evidence="1">
    <location>
        <begin position="218"/>
        <end position="240"/>
    </location>
</feature>
<feature type="transmembrane region" description="Helical" evidence="1">
    <location>
        <begin position="255"/>
        <end position="277"/>
    </location>
</feature>
<feature type="transmembrane region" description="Helical" evidence="1">
    <location>
        <begin position="279"/>
        <end position="301"/>
    </location>
</feature>
<feature type="transmembrane region" description="Helical" evidence="1">
    <location>
        <begin position="316"/>
        <end position="338"/>
    </location>
</feature>
<gene>
    <name type="ordered locus">BC_5174</name>
</gene>
<accession>Q812J5</accession>
<comment type="subcellular location">
    <subcellularLocation>
        <location evidence="2">Cell membrane</location>
        <topology evidence="2">Multi-pass membrane protein</topology>
    </subcellularLocation>
</comment>
<comment type="similarity">
    <text evidence="2">Belongs to the UPF0324 family.</text>
</comment>
<name>Y5174_BACCR</name>
<sequence length="340" mass="35753">MEQTLVIQKKKGFGFSQGIGITLLIAIAAKYLAELPFLNIMGQLVIAILIGMVWRAAIGVPHDAIAGTNFASKKLLRFGIILLGMRLNLVDIAKAGPKVLVIAAVVITFTIFVVYGLTKVFKVEKKLGILTACGTAICGAAAVVAIAPQVKAKDDETAVGAAIIAILGTIFTLIYTLLYPVLGLSPYGYGVFSGATLHEIAHVIAAAAPGGSTAVDIAVIVKLTRVAMLVPVAILIGLWFGKSEGSEGKRSWRELPIPWFIFGFLAMSAVHSLGIIPEVVAGYIVVLAYMLIAMAMAGLGLNVEFKTFRKLGSKAFVAGLIGSVCLSVLGYVLVYALGFM</sequence>
<dbReference type="EMBL" id="AE016877">
    <property type="protein sequence ID" value="AAP12039.1"/>
    <property type="molecule type" value="Genomic_DNA"/>
</dbReference>
<dbReference type="RefSeq" id="NP_834838.1">
    <property type="nucleotide sequence ID" value="NC_004722.1"/>
</dbReference>
<dbReference type="RefSeq" id="WP_000438415.1">
    <property type="nucleotide sequence ID" value="NZ_CP138336.1"/>
</dbReference>
<dbReference type="STRING" id="226900.BC_5174"/>
<dbReference type="KEGG" id="bce:BC5174"/>
<dbReference type="PATRIC" id="fig|226900.8.peg.5332"/>
<dbReference type="HOGENOM" id="CLU_033541_0_1_9"/>
<dbReference type="OrthoDB" id="9811391at2"/>
<dbReference type="Proteomes" id="UP000001417">
    <property type="component" value="Chromosome"/>
</dbReference>
<dbReference type="GO" id="GO:0005886">
    <property type="term" value="C:plasma membrane"/>
    <property type="evidence" value="ECO:0000318"/>
    <property type="project" value="GO_Central"/>
</dbReference>
<dbReference type="InterPro" id="IPR018383">
    <property type="entry name" value="UPF0324_pro"/>
</dbReference>
<dbReference type="PANTHER" id="PTHR30106">
    <property type="entry name" value="INNER MEMBRANE PROTEIN YEIH-RELATED"/>
    <property type="match status" value="1"/>
</dbReference>
<dbReference type="PANTHER" id="PTHR30106:SF2">
    <property type="entry name" value="UPF0324 INNER MEMBRANE PROTEIN YEIH"/>
    <property type="match status" value="1"/>
</dbReference>
<dbReference type="Pfam" id="PF03601">
    <property type="entry name" value="Cons_hypoth698"/>
    <property type="match status" value="1"/>
</dbReference>
<proteinExistence type="inferred from homology"/>